<feature type="chain" id="PRO_0000287016" description="Cyclin-B2-5">
    <location>
        <begin position="1"/>
        <end position="265"/>
    </location>
</feature>
<name>CCB25_ARATH</name>
<accession>Q9LM91</accession>
<accession>F4HUL1</accession>
<accession>Q9LMW7</accession>
<evidence type="ECO:0000305" key="1"/>
<reference key="1">
    <citation type="journal article" date="2000" name="Nature">
        <title>Sequence and analysis of chromosome 1 of the plant Arabidopsis thaliana.</title>
        <authorList>
            <person name="Theologis A."/>
            <person name="Ecker J.R."/>
            <person name="Palm C.J."/>
            <person name="Federspiel N.A."/>
            <person name="Kaul S."/>
            <person name="White O."/>
            <person name="Alonso J."/>
            <person name="Altafi H."/>
            <person name="Araujo R."/>
            <person name="Bowman C.L."/>
            <person name="Brooks S.Y."/>
            <person name="Buehler E."/>
            <person name="Chan A."/>
            <person name="Chao Q."/>
            <person name="Chen H."/>
            <person name="Cheuk R.F."/>
            <person name="Chin C.W."/>
            <person name="Chung M.K."/>
            <person name="Conn L."/>
            <person name="Conway A.B."/>
            <person name="Conway A.R."/>
            <person name="Creasy T.H."/>
            <person name="Dewar K."/>
            <person name="Dunn P."/>
            <person name="Etgu P."/>
            <person name="Feldblyum T.V."/>
            <person name="Feng J.-D."/>
            <person name="Fong B."/>
            <person name="Fujii C.Y."/>
            <person name="Gill J.E."/>
            <person name="Goldsmith A.D."/>
            <person name="Haas B."/>
            <person name="Hansen N.F."/>
            <person name="Hughes B."/>
            <person name="Huizar L."/>
            <person name="Hunter J.L."/>
            <person name="Jenkins J."/>
            <person name="Johnson-Hopson C."/>
            <person name="Khan S."/>
            <person name="Khaykin E."/>
            <person name="Kim C.J."/>
            <person name="Koo H.L."/>
            <person name="Kremenetskaia I."/>
            <person name="Kurtz D.B."/>
            <person name="Kwan A."/>
            <person name="Lam B."/>
            <person name="Langin-Hooper S."/>
            <person name="Lee A."/>
            <person name="Lee J.M."/>
            <person name="Lenz C.A."/>
            <person name="Li J.H."/>
            <person name="Li Y.-P."/>
            <person name="Lin X."/>
            <person name="Liu S.X."/>
            <person name="Liu Z.A."/>
            <person name="Luros J.S."/>
            <person name="Maiti R."/>
            <person name="Marziali A."/>
            <person name="Militscher J."/>
            <person name="Miranda M."/>
            <person name="Nguyen M."/>
            <person name="Nierman W.C."/>
            <person name="Osborne B.I."/>
            <person name="Pai G."/>
            <person name="Peterson J."/>
            <person name="Pham P.K."/>
            <person name="Rizzo M."/>
            <person name="Rooney T."/>
            <person name="Rowley D."/>
            <person name="Sakano H."/>
            <person name="Salzberg S.L."/>
            <person name="Schwartz J.R."/>
            <person name="Shinn P."/>
            <person name="Southwick A.M."/>
            <person name="Sun H."/>
            <person name="Tallon L.J."/>
            <person name="Tambunga G."/>
            <person name="Toriumi M.J."/>
            <person name="Town C.D."/>
            <person name="Utterback T."/>
            <person name="Van Aken S."/>
            <person name="Vaysberg M."/>
            <person name="Vysotskaia V.S."/>
            <person name="Walker M."/>
            <person name="Wu D."/>
            <person name="Yu G."/>
            <person name="Fraser C.M."/>
            <person name="Venter J.C."/>
            <person name="Davis R.W."/>
        </authorList>
    </citation>
    <scope>NUCLEOTIDE SEQUENCE [LARGE SCALE GENOMIC DNA]</scope>
    <source>
        <strain>cv. Columbia</strain>
    </source>
</reference>
<reference key="2">
    <citation type="journal article" date="2017" name="Plant J.">
        <title>Araport11: a complete reannotation of the Arabidopsis thaliana reference genome.</title>
        <authorList>
            <person name="Cheng C.Y."/>
            <person name="Krishnakumar V."/>
            <person name="Chan A.P."/>
            <person name="Thibaud-Nissen F."/>
            <person name="Schobel S."/>
            <person name="Town C.D."/>
        </authorList>
    </citation>
    <scope>GENOME REANNOTATION</scope>
    <source>
        <strain>cv. Columbia</strain>
    </source>
</reference>
<reference key="3">
    <citation type="journal article" date="2004" name="Plant Physiol.">
        <title>Genome-wide analysis of the cyclin family in Arabidopsis and comparative phylogenetic analysis of plant cyclin-like proteins.</title>
        <authorList>
            <person name="Wang G."/>
            <person name="Kong H."/>
            <person name="Sun Y."/>
            <person name="Zhang X."/>
            <person name="Zhang W."/>
            <person name="Altman N."/>
            <person name="dePamphilis C.W."/>
            <person name="Ma H."/>
        </authorList>
    </citation>
    <scope>GENE FAMILY</scope>
    <scope>NOMENCLATURE</scope>
</reference>
<gene>
    <name type="primary">CYCB2-5</name>
    <name type="ordered locus">At1g20590</name>
    <name type="ORF">F2D10.8</name>
    <name type="ORF">F5M15.8</name>
</gene>
<protein>
    <recommendedName>
        <fullName>Cyclin-B2-5</fullName>
    </recommendedName>
    <alternativeName>
        <fullName>G2/mitotic-specific cyclin-B2-5</fullName>
        <shortName>CycB2;5</shortName>
    </alternativeName>
</protein>
<comment type="similarity">
    <text evidence="1">Belongs to the cyclin family. Cyclin AB subfamily.</text>
</comment>
<comment type="sequence caution" evidence="1">
    <conflict type="erroneous gene model prediction">
        <sequence resource="EMBL-CDS" id="AAF80639"/>
    </conflict>
</comment>
<keyword id="KW-0131">Cell cycle</keyword>
<keyword id="KW-0132">Cell division</keyword>
<keyword id="KW-0195">Cyclin</keyword>
<keyword id="KW-1185">Reference proteome</keyword>
<proteinExistence type="inferred from homology"/>
<sequence>MNYSNNYIEHQNKKKTIIIFFRQFKKQKPMLRMGVHLVVINKNTFNFFNRQNNYFNSGKTKKIFVIDRFLAVHQIVRKKLQLVGVTALLLACKYEEVSVPVVDDLILISDKAYSRREVLDMEKLMANTLQFNFSLPTPYVFMKRFLKAAQSDKKLEILSFFMIELCLVEYEMLEYLPSKLAASAIYTAQCTLKGFEEWSKTCEFHTGYNEEQLLACARKMVAFHHKAGTGKLTGSTTHLSSFMLQEVNQLGFCFKGGKNYNKNLI</sequence>
<organism>
    <name type="scientific">Arabidopsis thaliana</name>
    <name type="common">Mouse-ear cress</name>
    <dbReference type="NCBI Taxonomy" id="3702"/>
    <lineage>
        <taxon>Eukaryota</taxon>
        <taxon>Viridiplantae</taxon>
        <taxon>Streptophyta</taxon>
        <taxon>Embryophyta</taxon>
        <taxon>Tracheophyta</taxon>
        <taxon>Spermatophyta</taxon>
        <taxon>Magnoliopsida</taxon>
        <taxon>eudicotyledons</taxon>
        <taxon>Gunneridae</taxon>
        <taxon>Pentapetalae</taxon>
        <taxon>rosids</taxon>
        <taxon>malvids</taxon>
        <taxon>Brassicales</taxon>
        <taxon>Brassicaceae</taxon>
        <taxon>Camelineae</taxon>
        <taxon>Arabidopsis</taxon>
    </lineage>
</organism>
<dbReference type="EMBL" id="AC027665">
    <property type="protein sequence ID" value="AAF79604.1"/>
    <property type="molecule type" value="Genomic_DNA"/>
</dbReference>
<dbReference type="EMBL" id="AC069251">
    <property type="protein sequence ID" value="AAF80639.1"/>
    <property type="status" value="ALT_SEQ"/>
    <property type="molecule type" value="Genomic_DNA"/>
</dbReference>
<dbReference type="EMBL" id="CP002684">
    <property type="protein sequence ID" value="AEE29991.2"/>
    <property type="molecule type" value="Genomic_DNA"/>
</dbReference>
<dbReference type="PIR" id="A86339">
    <property type="entry name" value="A86339"/>
</dbReference>
<dbReference type="RefSeq" id="NP_001319051.1">
    <property type="nucleotide sequence ID" value="NM_001332451.1"/>
</dbReference>
<dbReference type="SMR" id="Q9LM91"/>
<dbReference type="BioGRID" id="23887">
    <property type="interactions" value="9"/>
</dbReference>
<dbReference type="FunCoup" id="Q9LM91">
    <property type="interactions" value="17"/>
</dbReference>
<dbReference type="IntAct" id="Q9LM91">
    <property type="interactions" value="2"/>
</dbReference>
<dbReference type="STRING" id="3702.Q9LM91"/>
<dbReference type="PaxDb" id="3702-AT1G20590.1"/>
<dbReference type="EnsemblPlants" id="AT1G20590.1">
    <property type="protein sequence ID" value="AT1G20590.1"/>
    <property type="gene ID" value="AT1G20590"/>
</dbReference>
<dbReference type="GeneID" id="838648"/>
<dbReference type="Gramene" id="AT1G20590.1">
    <property type="protein sequence ID" value="AT1G20590.1"/>
    <property type="gene ID" value="AT1G20590"/>
</dbReference>
<dbReference type="KEGG" id="ath:AT1G20590"/>
<dbReference type="Araport" id="AT1G20590"/>
<dbReference type="TAIR" id="AT1G20590"/>
<dbReference type="eggNOG" id="KOG0653">
    <property type="taxonomic scope" value="Eukaryota"/>
</dbReference>
<dbReference type="HOGENOM" id="CLU_1373925_0_0_1"/>
<dbReference type="InParanoid" id="Q9LM91"/>
<dbReference type="OMA" id="KFEEPNA"/>
<dbReference type="PhylomeDB" id="Q9LM91"/>
<dbReference type="PRO" id="PR:Q9LM91"/>
<dbReference type="Proteomes" id="UP000006548">
    <property type="component" value="Chromosome 1"/>
</dbReference>
<dbReference type="ExpressionAtlas" id="Q9LM91">
    <property type="expression patterns" value="baseline and differential"/>
</dbReference>
<dbReference type="GO" id="GO:0051301">
    <property type="term" value="P:cell division"/>
    <property type="evidence" value="ECO:0007669"/>
    <property type="project" value="UniProtKB-KW"/>
</dbReference>
<dbReference type="CDD" id="cd20511">
    <property type="entry name" value="CYCLIN_AtCycB-like_rpt2"/>
    <property type="match status" value="1"/>
</dbReference>
<dbReference type="FunFam" id="1.10.472.10:FF:000032">
    <property type="entry name" value="G2/mitotic-specific cyclin-1"/>
    <property type="match status" value="1"/>
</dbReference>
<dbReference type="Gene3D" id="1.10.472.10">
    <property type="entry name" value="Cyclin-like"/>
    <property type="match status" value="2"/>
</dbReference>
<dbReference type="InterPro" id="IPR039361">
    <property type="entry name" value="Cyclin"/>
</dbReference>
<dbReference type="InterPro" id="IPR013763">
    <property type="entry name" value="Cyclin-like_dom"/>
</dbReference>
<dbReference type="InterPro" id="IPR036915">
    <property type="entry name" value="Cyclin-like_sf"/>
</dbReference>
<dbReference type="InterPro" id="IPR004367">
    <property type="entry name" value="Cyclin_C-dom"/>
</dbReference>
<dbReference type="InterPro" id="IPR006671">
    <property type="entry name" value="Cyclin_N"/>
</dbReference>
<dbReference type="PANTHER" id="PTHR10177">
    <property type="entry name" value="CYCLINS"/>
    <property type="match status" value="1"/>
</dbReference>
<dbReference type="Pfam" id="PF02984">
    <property type="entry name" value="Cyclin_C"/>
    <property type="match status" value="1"/>
</dbReference>
<dbReference type="Pfam" id="PF00134">
    <property type="entry name" value="Cyclin_N"/>
    <property type="match status" value="1"/>
</dbReference>
<dbReference type="SMART" id="SM00385">
    <property type="entry name" value="CYCLIN"/>
    <property type="match status" value="2"/>
</dbReference>
<dbReference type="SMART" id="SM01332">
    <property type="entry name" value="Cyclin_C"/>
    <property type="match status" value="1"/>
</dbReference>
<dbReference type="SUPFAM" id="SSF47954">
    <property type="entry name" value="Cyclin-like"/>
    <property type="match status" value="2"/>
</dbReference>